<accession>P85454</accession>
<evidence type="ECO:0000255" key="1"/>
<evidence type="ECO:0000269" key="2">
    <source>
    </source>
</evidence>
<evidence type="ECO:0000303" key="3">
    <source>
    </source>
</evidence>
<evidence type="ECO:0000305" key="4"/>
<comment type="subcellular location">
    <subcellularLocation>
        <location evidence="4">Secreted</location>
    </subcellularLocation>
</comment>
<comment type="tissue specificity">
    <text evidence="2">Detected in the thoracic perisympathetic organs in larvae, and the dorsal ganglionic sheath in adults (at protein level).</text>
</comment>
<comment type="mass spectrometry">
    <text>Without pyrrolidone carboxylic acid at Gln-1.</text>
</comment>
<comment type="mass spectrometry">
    <text>With pyrrolidone carboxylic acid at Gln-1.</text>
</comment>
<comment type="similarity">
    <text evidence="1">Belongs to the FARP (FMRFamide related peptide) family.</text>
</comment>
<dbReference type="GO" id="GO:0005576">
    <property type="term" value="C:extracellular region"/>
    <property type="evidence" value="ECO:0007669"/>
    <property type="project" value="UniProtKB-SubCell"/>
</dbReference>
<dbReference type="GO" id="GO:0007218">
    <property type="term" value="P:neuropeptide signaling pathway"/>
    <property type="evidence" value="ECO:0007669"/>
    <property type="project" value="UniProtKB-KW"/>
</dbReference>
<name>FAR7_LUCCU</name>
<keyword id="KW-0027">Amidation</keyword>
<keyword id="KW-0903">Direct protein sequencing</keyword>
<keyword id="KW-0527">Neuropeptide</keyword>
<keyword id="KW-0873">Pyrrolidone carboxylic acid</keyword>
<keyword id="KW-0964">Secreted</keyword>
<feature type="peptide" id="PRO_0000371752" description="FMRFamide-7">
    <location>
        <begin position="1"/>
        <end position="9"/>
    </location>
</feature>
<feature type="modified residue" description="Pyrrolidone carboxylic acid; partial" evidence="2">
    <location>
        <position position="1"/>
    </location>
</feature>
<feature type="modified residue" description="Phenylalanine amide" evidence="2">
    <location>
        <position position="9"/>
    </location>
</feature>
<proteinExistence type="evidence at protein level"/>
<protein>
    <recommendedName>
        <fullName>FMRFamide-7</fullName>
    </recommendedName>
    <alternativeName>
        <fullName evidence="3">LucFMRFamide-7</fullName>
    </alternativeName>
</protein>
<reference evidence="4" key="1">
    <citation type="journal article" date="2009" name="Gen. Comp. Endocrinol.">
        <title>Extended FMRFamides in dipteran insects: conservative expression in the neuroendocrine system is accompanied by rapid sequence evolution.</title>
        <authorList>
            <person name="Rahman M.M."/>
            <person name="Fromm B."/>
            <person name="Neupert S."/>
            <person name="Kreusch S."/>
            <person name="Predel R."/>
        </authorList>
    </citation>
    <scope>PROTEIN SEQUENCE</scope>
    <scope>TISSUE SPECIFICITY</scope>
    <scope>MASS SPECTROMETRY</scope>
    <scope>PYROGLUTAMATE FORMATION AT GLN-1</scope>
    <scope>AMIDATION AT PHE-9</scope>
    <source>
        <strain evidence="2">Bangladesh</strain>
        <strain evidence="2">Goondiwindi</strain>
        <tissue evidence="2">Dorsal ganglionic sheath</tissue>
    </source>
</reference>
<organism>
    <name type="scientific">Lucilia cuprina</name>
    <name type="common">Green bottle fly</name>
    <name type="synonym">Australian sheep blowfly</name>
    <dbReference type="NCBI Taxonomy" id="7375"/>
    <lineage>
        <taxon>Eukaryota</taxon>
        <taxon>Metazoa</taxon>
        <taxon>Ecdysozoa</taxon>
        <taxon>Arthropoda</taxon>
        <taxon>Hexapoda</taxon>
        <taxon>Insecta</taxon>
        <taxon>Pterygota</taxon>
        <taxon>Neoptera</taxon>
        <taxon>Endopterygota</taxon>
        <taxon>Diptera</taxon>
        <taxon>Brachycera</taxon>
        <taxon>Muscomorpha</taxon>
        <taxon>Oestroidea</taxon>
        <taxon>Calliphoridae</taxon>
        <taxon>Luciliinae</taxon>
        <taxon>Lucilia</taxon>
    </lineage>
</organism>
<sequence>QANQDFMRF</sequence>